<dbReference type="EC" id="3.5.1.5" evidence="1"/>
<dbReference type="EMBL" id="CP000438">
    <property type="protein sequence ID" value="ABJ14249.1"/>
    <property type="molecule type" value="Genomic_DNA"/>
</dbReference>
<dbReference type="RefSeq" id="WP_003095443.1">
    <property type="nucleotide sequence ID" value="NZ_CP034244.1"/>
</dbReference>
<dbReference type="SMR" id="Q02FF4"/>
<dbReference type="KEGG" id="pau:PA14_64350"/>
<dbReference type="PseudoCAP" id="PA14_64350"/>
<dbReference type="HOGENOM" id="CLU_145825_1_0_6"/>
<dbReference type="BioCyc" id="PAER208963:G1G74-5436-MONOMER"/>
<dbReference type="UniPathway" id="UPA00258">
    <property type="reaction ID" value="UER00370"/>
</dbReference>
<dbReference type="Proteomes" id="UP000000653">
    <property type="component" value="Chromosome"/>
</dbReference>
<dbReference type="GO" id="GO:0005737">
    <property type="term" value="C:cytoplasm"/>
    <property type="evidence" value="ECO:0007669"/>
    <property type="project" value="UniProtKB-SubCell"/>
</dbReference>
<dbReference type="GO" id="GO:0016151">
    <property type="term" value="F:nickel cation binding"/>
    <property type="evidence" value="ECO:0007669"/>
    <property type="project" value="InterPro"/>
</dbReference>
<dbReference type="GO" id="GO:0009039">
    <property type="term" value="F:urease activity"/>
    <property type="evidence" value="ECO:0007669"/>
    <property type="project" value="UniProtKB-UniRule"/>
</dbReference>
<dbReference type="GO" id="GO:0043419">
    <property type="term" value="P:urea catabolic process"/>
    <property type="evidence" value="ECO:0007669"/>
    <property type="project" value="UniProtKB-UniRule"/>
</dbReference>
<dbReference type="CDD" id="cd00390">
    <property type="entry name" value="Urease_gamma"/>
    <property type="match status" value="1"/>
</dbReference>
<dbReference type="Gene3D" id="3.30.280.10">
    <property type="entry name" value="Urease, gamma-like subunit"/>
    <property type="match status" value="1"/>
</dbReference>
<dbReference type="HAMAP" id="MF_00739">
    <property type="entry name" value="Urease_gamma"/>
    <property type="match status" value="1"/>
</dbReference>
<dbReference type="InterPro" id="IPR012010">
    <property type="entry name" value="Urease_gamma"/>
</dbReference>
<dbReference type="InterPro" id="IPR002026">
    <property type="entry name" value="Urease_gamma/gamma-beta_su"/>
</dbReference>
<dbReference type="InterPro" id="IPR036463">
    <property type="entry name" value="Urease_gamma_sf"/>
</dbReference>
<dbReference type="InterPro" id="IPR050069">
    <property type="entry name" value="Urease_subunit"/>
</dbReference>
<dbReference type="NCBIfam" id="NF009712">
    <property type="entry name" value="PRK13241.1"/>
    <property type="match status" value="1"/>
</dbReference>
<dbReference type="NCBIfam" id="TIGR00193">
    <property type="entry name" value="urease_gam"/>
    <property type="match status" value="1"/>
</dbReference>
<dbReference type="PANTHER" id="PTHR33569">
    <property type="entry name" value="UREASE"/>
    <property type="match status" value="1"/>
</dbReference>
<dbReference type="PANTHER" id="PTHR33569:SF1">
    <property type="entry name" value="UREASE"/>
    <property type="match status" value="1"/>
</dbReference>
<dbReference type="Pfam" id="PF00547">
    <property type="entry name" value="Urease_gamma"/>
    <property type="match status" value="1"/>
</dbReference>
<dbReference type="PIRSF" id="PIRSF001223">
    <property type="entry name" value="Urease_gamma"/>
    <property type="match status" value="1"/>
</dbReference>
<dbReference type="SUPFAM" id="SSF54111">
    <property type="entry name" value="Urease, gamma-subunit"/>
    <property type="match status" value="1"/>
</dbReference>
<comment type="catalytic activity">
    <reaction evidence="1">
        <text>urea + 2 H2O + H(+) = hydrogencarbonate + 2 NH4(+)</text>
        <dbReference type="Rhea" id="RHEA:20557"/>
        <dbReference type="ChEBI" id="CHEBI:15377"/>
        <dbReference type="ChEBI" id="CHEBI:15378"/>
        <dbReference type="ChEBI" id="CHEBI:16199"/>
        <dbReference type="ChEBI" id="CHEBI:17544"/>
        <dbReference type="ChEBI" id="CHEBI:28938"/>
        <dbReference type="EC" id="3.5.1.5"/>
    </reaction>
</comment>
<comment type="pathway">
    <text evidence="1">Nitrogen metabolism; urea degradation; CO(2) and NH(3) from urea (urease route): step 1/1.</text>
</comment>
<comment type="subunit">
    <text evidence="1">Heterotrimer of UreA (gamma), UreB (beta) and UreC (alpha) subunits. Three heterotrimers associate to form the active enzyme.</text>
</comment>
<comment type="subcellular location">
    <subcellularLocation>
        <location evidence="1">Cytoplasm</location>
    </subcellularLocation>
</comment>
<comment type="similarity">
    <text evidence="1">Belongs to the urease gamma subunit family.</text>
</comment>
<gene>
    <name evidence="1" type="primary">ureA</name>
    <name type="ordered locus">PA14_64350</name>
</gene>
<sequence>MDLSPREKDKLLIFTAGLLAERRLARGLKLNYPEAVALISAALLEGARDGRSVAELMHYGTTLLSREQVMEGVPEMIPDIQVEATFPDGTKLVTVHQPIA</sequence>
<feature type="chain" id="PRO_1000046353" description="Urease subunit gamma">
    <location>
        <begin position="1"/>
        <end position="100"/>
    </location>
</feature>
<protein>
    <recommendedName>
        <fullName evidence="1">Urease subunit gamma</fullName>
        <ecNumber evidence="1">3.5.1.5</ecNumber>
    </recommendedName>
    <alternativeName>
        <fullName evidence="1">Urea amidohydrolase subunit gamma</fullName>
    </alternativeName>
</protein>
<proteinExistence type="inferred from homology"/>
<evidence type="ECO:0000255" key="1">
    <source>
        <dbReference type="HAMAP-Rule" id="MF_00739"/>
    </source>
</evidence>
<accession>Q02FF4</accession>
<reference key="1">
    <citation type="journal article" date="2006" name="Genome Biol.">
        <title>Genomic analysis reveals that Pseudomonas aeruginosa virulence is combinatorial.</title>
        <authorList>
            <person name="Lee D.G."/>
            <person name="Urbach J.M."/>
            <person name="Wu G."/>
            <person name="Liberati N.T."/>
            <person name="Feinbaum R.L."/>
            <person name="Miyata S."/>
            <person name="Diggins L.T."/>
            <person name="He J."/>
            <person name="Saucier M."/>
            <person name="Deziel E."/>
            <person name="Friedman L."/>
            <person name="Li L."/>
            <person name="Grills G."/>
            <person name="Montgomery K."/>
            <person name="Kucherlapati R."/>
            <person name="Rahme L.G."/>
            <person name="Ausubel F.M."/>
        </authorList>
    </citation>
    <scope>NUCLEOTIDE SEQUENCE [LARGE SCALE GENOMIC DNA]</scope>
    <source>
        <strain>UCBPP-PA14</strain>
    </source>
</reference>
<organism>
    <name type="scientific">Pseudomonas aeruginosa (strain UCBPP-PA14)</name>
    <dbReference type="NCBI Taxonomy" id="208963"/>
    <lineage>
        <taxon>Bacteria</taxon>
        <taxon>Pseudomonadati</taxon>
        <taxon>Pseudomonadota</taxon>
        <taxon>Gammaproteobacteria</taxon>
        <taxon>Pseudomonadales</taxon>
        <taxon>Pseudomonadaceae</taxon>
        <taxon>Pseudomonas</taxon>
    </lineage>
</organism>
<keyword id="KW-0963">Cytoplasm</keyword>
<keyword id="KW-0378">Hydrolase</keyword>
<name>URE3_PSEAB</name>